<reference key="1">
    <citation type="submission" date="2004-11" db="EMBL/GenBank/DDBJ databases">
        <authorList>
            <consortium name="The German cDNA consortium"/>
        </authorList>
    </citation>
    <scope>NUCLEOTIDE SEQUENCE [LARGE SCALE MRNA]</scope>
    <source>
        <tissue>Kidney</tissue>
    </source>
</reference>
<proteinExistence type="evidence at transcript level"/>
<protein>
    <recommendedName>
        <fullName>Grancalcin</fullName>
    </recommendedName>
</protein>
<dbReference type="EMBL" id="CR859029">
    <property type="protein sequence ID" value="CAH91224.1"/>
    <property type="molecule type" value="mRNA"/>
</dbReference>
<dbReference type="RefSeq" id="NP_001127389.1">
    <property type="nucleotide sequence ID" value="NM_001133917.2"/>
</dbReference>
<dbReference type="SMR" id="Q5RAI6"/>
<dbReference type="FunCoup" id="Q5RAI6">
    <property type="interactions" value="522"/>
</dbReference>
<dbReference type="STRING" id="9601.ENSPPYP00000014382"/>
<dbReference type="Ensembl" id="ENSPPYT00000014968.3">
    <property type="protein sequence ID" value="ENSPPYP00000014382.2"/>
    <property type="gene ID" value="ENSPPYG00000012888.3"/>
</dbReference>
<dbReference type="GeneID" id="100174456"/>
<dbReference type="KEGG" id="pon:100174456"/>
<dbReference type="CTD" id="25801"/>
<dbReference type="eggNOG" id="KOG0037">
    <property type="taxonomic scope" value="Eukaryota"/>
</dbReference>
<dbReference type="GeneTree" id="ENSGT00940000153979"/>
<dbReference type="HOGENOM" id="CLU_051357_4_0_1"/>
<dbReference type="InParanoid" id="Q5RAI6"/>
<dbReference type="OrthoDB" id="186625at2759"/>
<dbReference type="TreeFam" id="TF314682"/>
<dbReference type="Proteomes" id="UP000001595">
    <property type="component" value="Chromosome 2B"/>
</dbReference>
<dbReference type="GO" id="GO:0005737">
    <property type="term" value="C:cytoplasm"/>
    <property type="evidence" value="ECO:0007669"/>
    <property type="project" value="UniProtKB-SubCell"/>
</dbReference>
<dbReference type="GO" id="GO:0016020">
    <property type="term" value="C:membrane"/>
    <property type="evidence" value="ECO:0007669"/>
    <property type="project" value="UniProtKB-KW"/>
</dbReference>
<dbReference type="GO" id="GO:0005509">
    <property type="term" value="F:calcium ion binding"/>
    <property type="evidence" value="ECO:0000250"/>
    <property type="project" value="UniProtKB"/>
</dbReference>
<dbReference type="CDD" id="cd16186">
    <property type="entry name" value="EFh_PEF_grancalcin"/>
    <property type="match status" value="1"/>
</dbReference>
<dbReference type="FunFam" id="1.10.238.10:FF:000087">
    <property type="entry name" value="Sorcin"/>
    <property type="match status" value="1"/>
</dbReference>
<dbReference type="Gene3D" id="6.10.140.900">
    <property type="match status" value="1"/>
</dbReference>
<dbReference type="Gene3D" id="1.10.238.10">
    <property type="entry name" value="EF-hand"/>
    <property type="match status" value="1"/>
</dbReference>
<dbReference type="InterPro" id="IPR011992">
    <property type="entry name" value="EF-hand-dom_pair"/>
</dbReference>
<dbReference type="InterPro" id="IPR018247">
    <property type="entry name" value="EF_Hand_1_Ca_BS"/>
</dbReference>
<dbReference type="InterPro" id="IPR002048">
    <property type="entry name" value="EF_hand_dom"/>
</dbReference>
<dbReference type="PANTHER" id="PTHR46735">
    <property type="entry name" value="CALPAIN, SMALL SUBUNIT 1 A-RELATED"/>
    <property type="match status" value="1"/>
</dbReference>
<dbReference type="PANTHER" id="PTHR46735:SF5">
    <property type="entry name" value="GRANCALCIN"/>
    <property type="match status" value="1"/>
</dbReference>
<dbReference type="Pfam" id="PF13202">
    <property type="entry name" value="EF-hand_5"/>
    <property type="match status" value="1"/>
</dbReference>
<dbReference type="Pfam" id="PF13833">
    <property type="entry name" value="EF-hand_8"/>
    <property type="match status" value="1"/>
</dbReference>
<dbReference type="SMART" id="SM00054">
    <property type="entry name" value="EFh"/>
    <property type="match status" value="2"/>
</dbReference>
<dbReference type="SUPFAM" id="SSF47473">
    <property type="entry name" value="EF-hand"/>
    <property type="match status" value="1"/>
</dbReference>
<dbReference type="PROSITE" id="PS00018">
    <property type="entry name" value="EF_HAND_1"/>
    <property type="match status" value="1"/>
</dbReference>
<dbReference type="PROSITE" id="PS50222">
    <property type="entry name" value="EF_HAND_2"/>
    <property type="match status" value="2"/>
</dbReference>
<organism>
    <name type="scientific">Pongo abelii</name>
    <name type="common">Sumatran orangutan</name>
    <name type="synonym">Pongo pygmaeus abelii</name>
    <dbReference type="NCBI Taxonomy" id="9601"/>
    <lineage>
        <taxon>Eukaryota</taxon>
        <taxon>Metazoa</taxon>
        <taxon>Chordata</taxon>
        <taxon>Craniata</taxon>
        <taxon>Vertebrata</taxon>
        <taxon>Euteleostomi</taxon>
        <taxon>Mammalia</taxon>
        <taxon>Eutheria</taxon>
        <taxon>Euarchontoglires</taxon>
        <taxon>Primates</taxon>
        <taxon>Haplorrhini</taxon>
        <taxon>Catarrhini</taxon>
        <taxon>Hominidae</taxon>
        <taxon>Pongo</taxon>
    </lineage>
</organism>
<sequence length="218" mass="24098">MAYPGYGGGFGNFSIQVPGMQMGQPVPETGPGILLDGYSGCPAFSDTYSSAGDSVYTYFSAVAGQDGEVDAEELQRCLTQSGISGTYSPFSLETCRIMIAMLDRDYTGKMGFNAFKELWSALNAWKENFMTVDQDGSGTVEHHELRQAIGLMGYRLSPQTLTTIVKRYSKNGRIFFDDYVACCVKLRALTDFFRKRDHLQQGSANFIYDDFLQGTMAI</sequence>
<accession>Q5RAI6</accession>
<comment type="function">
    <text evidence="1">Calcium-binding protein that may play a role in the adhesion of neutrophils to fibronectin. May play a role in the formation of focal adhesions (By similarity).</text>
</comment>
<comment type="subunit">
    <text evidence="1">Homodimer. Interacts with SRI and LCP1 (By similarity).</text>
</comment>
<comment type="subcellular location">
    <subcellularLocation>
        <location evidence="2">Cytoplasm</location>
    </subcellularLocation>
    <subcellularLocation>
        <location evidence="2">Cytoplasmic granule membrane</location>
        <topology evidence="2">Peripheral membrane protein</topology>
        <orientation evidence="2">Cytoplasmic side</orientation>
    </subcellularLocation>
    <text evidence="2">Primarily cytosolic in the absence of calcium or magnesium ions. Relocates to granules and other membranes in response to elevated calcium and magnesium levels.</text>
</comment>
<comment type="miscellaneous">
    <text evidence="1">This protein has been shown to bind calcium with high affinity.</text>
</comment>
<keyword id="KW-0106">Calcium</keyword>
<keyword id="KW-0963">Cytoplasm</keyword>
<keyword id="KW-0472">Membrane</keyword>
<keyword id="KW-0479">Metal-binding</keyword>
<keyword id="KW-1185">Reference proteome</keyword>
<keyword id="KW-0677">Repeat</keyword>
<feature type="chain" id="PRO_0000073723" description="Grancalcin">
    <location>
        <begin position="1"/>
        <end position="218"/>
    </location>
</feature>
<feature type="domain" description="EF-hand 1" evidence="3">
    <location>
        <begin position="49"/>
        <end position="84"/>
    </location>
</feature>
<feature type="domain" description="EF-hand 2" evidence="4">
    <location>
        <begin position="85"/>
        <end position="119"/>
    </location>
</feature>
<feature type="domain" description="EF-hand 3" evidence="3">
    <location>
        <begin position="120"/>
        <end position="155"/>
    </location>
</feature>
<feature type="domain" description="EF-hand 4" evidence="4">
    <location>
        <begin position="156"/>
        <end position="191"/>
    </location>
</feature>
<feature type="binding site" evidence="4">
    <location>
        <position position="103"/>
    </location>
    <ligand>
        <name>Ca(2+)</name>
        <dbReference type="ChEBI" id="CHEBI:29108"/>
        <label>1</label>
    </ligand>
</feature>
<feature type="binding site" evidence="4">
    <location>
        <position position="105"/>
    </location>
    <ligand>
        <name>Ca(2+)</name>
        <dbReference type="ChEBI" id="CHEBI:29108"/>
        <label>1</label>
    </ligand>
</feature>
<feature type="binding site" evidence="4">
    <location>
        <position position="107"/>
    </location>
    <ligand>
        <name>Ca(2+)</name>
        <dbReference type="ChEBI" id="CHEBI:29108"/>
        <label>1</label>
    </ligand>
</feature>
<feature type="binding site" evidence="4">
    <location>
        <position position="109"/>
    </location>
    <ligand>
        <name>Ca(2+)</name>
        <dbReference type="ChEBI" id="CHEBI:29108"/>
        <label>1</label>
    </ligand>
</feature>
<feature type="binding site" evidence="3">
    <location>
        <position position="133"/>
    </location>
    <ligand>
        <name>Ca(2+)</name>
        <dbReference type="ChEBI" id="CHEBI:29108"/>
        <label>2</label>
    </ligand>
</feature>
<feature type="binding site" evidence="3">
    <location>
        <position position="135"/>
    </location>
    <ligand>
        <name>Ca(2+)</name>
        <dbReference type="ChEBI" id="CHEBI:29108"/>
        <label>2</label>
    </ligand>
</feature>
<feature type="binding site" evidence="3">
    <location>
        <position position="137"/>
    </location>
    <ligand>
        <name>Ca(2+)</name>
        <dbReference type="ChEBI" id="CHEBI:29108"/>
        <label>2</label>
    </ligand>
</feature>
<feature type="binding site" evidence="3">
    <location>
        <position position="139"/>
    </location>
    <ligand>
        <name>Ca(2+)</name>
        <dbReference type="ChEBI" id="CHEBI:29108"/>
        <label>2</label>
    </ligand>
</feature>
<feature type="binding site" evidence="3">
    <location>
        <position position="144"/>
    </location>
    <ligand>
        <name>Ca(2+)</name>
        <dbReference type="ChEBI" id="CHEBI:29108"/>
        <label>2</label>
    </ligand>
</feature>
<evidence type="ECO:0000250" key="1"/>
<evidence type="ECO:0000250" key="2">
    <source>
        <dbReference type="UniProtKB" id="P28676"/>
    </source>
</evidence>
<evidence type="ECO:0000255" key="3">
    <source>
        <dbReference type="PROSITE-ProRule" id="PRU00448"/>
    </source>
</evidence>
<evidence type="ECO:0000305" key="4"/>
<name>GRAN_PONAB</name>
<gene>
    <name type="primary">GCA</name>
</gene>